<comment type="function">
    <text evidence="1">Responsible for synthesis of pseudouridine from uracil-2457 in 23S ribosomal RNA.</text>
</comment>
<comment type="catalytic activity">
    <reaction>
        <text>uridine(2457) in 23S rRNA = pseudouridine(2457) in 23S rRNA</text>
        <dbReference type="Rhea" id="RHEA:38871"/>
        <dbReference type="Rhea" id="RHEA-COMP:10091"/>
        <dbReference type="Rhea" id="RHEA-COMP:10092"/>
        <dbReference type="ChEBI" id="CHEBI:65314"/>
        <dbReference type="ChEBI" id="CHEBI:65315"/>
        <dbReference type="EC" id="5.4.99.20"/>
    </reaction>
</comment>
<comment type="similarity">
    <text evidence="3">Belongs to the pseudouridine synthase RsuA family.</text>
</comment>
<gene>
    <name type="primary">rluE</name>
    <name type="ordered locus">VV1_2116</name>
</gene>
<proteinExistence type="inferred from homology"/>
<keyword id="KW-0413">Isomerase</keyword>
<keyword id="KW-0698">rRNA processing</keyword>
<accession>Q8DAS3</accession>
<dbReference type="EC" id="5.4.99.20"/>
<dbReference type="EMBL" id="AE016795">
    <property type="protein sequence ID" value="AAO10504.1"/>
    <property type="molecule type" value="Genomic_DNA"/>
</dbReference>
<dbReference type="RefSeq" id="WP_011080000.1">
    <property type="nucleotide sequence ID" value="NC_004459.3"/>
</dbReference>
<dbReference type="SMR" id="Q8DAS3"/>
<dbReference type="KEGG" id="vvu:VV1_2116"/>
<dbReference type="HOGENOM" id="CLU_024979_8_0_6"/>
<dbReference type="Proteomes" id="UP000002275">
    <property type="component" value="Chromosome 1"/>
</dbReference>
<dbReference type="GO" id="GO:0160137">
    <property type="term" value="F:23S rRNA pseudouridine(2457) synthase activity"/>
    <property type="evidence" value="ECO:0007669"/>
    <property type="project" value="UniProtKB-EC"/>
</dbReference>
<dbReference type="GO" id="GO:0003723">
    <property type="term" value="F:RNA binding"/>
    <property type="evidence" value="ECO:0007669"/>
    <property type="project" value="InterPro"/>
</dbReference>
<dbReference type="GO" id="GO:0001522">
    <property type="term" value="P:pseudouridine synthesis"/>
    <property type="evidence" value="ECO:0007669"/>
    <property type="project" value="InterPro"/>
</dbReference>
<dbReference type="GO" id="GO:0006364">
    <property type="term" value="P:rRNA processing"/>
    <property type="evidence" value="ECO:0007669"/>
    <property type="project" value="UniProtKB-KW"/>
</dbReference>
<dbReference type="CDD" id="cd02566">
    <property type="entry name" value="PseudoU_synth_RluE"/>
    <property type="match status" value="1"/>
</dbReference>
<dbReference type="Gene3D" id="3.30.70.1560">
    <property type="entry name" value="Alpha-L RNA-binding motif"/>
    <property type="match status" value="1"/>
</dbReference>
<dbReference type="Gene3D" id="3.30.70.580">
    <property type="entry name" value="Pseudouridine synthase I, catalytic domain, N-terminal subdomain"/>
    <property type="match status" value="1"/>
</dbReference>
<dbReference type="InterPro" id="IPR042092">
    <property type="entry name" value="PsdUridine_s_RsuA/RluB/E/F_cat"/>
</dbReference>
<dbReference type="InterPro" id="IPR020103">
    <property type="entry name" value="PsdUridine_synth_cat_dom_sf"/>
</dbReference>
<dbReference type="InterPro" id="IPR006145">
    <property type="entry name" value="PsdUridine_synth_RsuA/RluA"/>
</dbReference>
<dbReference type="InterPro" id="IPR000748">
    <property type="entry name" value="PsdUridine_synth_RsuA/RluB/E/F"/>
</dbReference>
<dbReference type="InterPro" id="IPR018496">
    <property type="entry name" value="PsdUridine_synth_RsuA/RluB_CS"/>
</dbReference>
<dbReference type="InterPro" id="IPR050343">
    <property type="entry name" value="RsuA_PseudoU_synthase"/>
</dbReference>
<dbReference type="InterPro" id="IPR020094">
    <property type="entry name" value="TruA/RsuA/RluB/E/F_N"/>
</dbReference>
<dbReference type="NCBIfam" id="TIGR00093">
    <property type="entry name" value="pseudouridine synthase"/>
    <property type="match status" value="1"/>
</dbReference>
<dbReference type="PANTHER" id="PTHR47683">
    <property type="entry name" value="PSEUDOURIDINE SYNTHASE FAMILY PROTEIN-RELATED"/>
    <property type="match status" value="1"/>
</dbReference>
<dbReference type="PANTHER" id="PTHR47683:SF2">
    <property type="entry name" value="RNA-BINDING S4 DOMAIN-CONTAINING PROTEIN"/>
    <property type="match status" value="1"/>
</dbReference>
<dbReference type="Pfam" id="PF00849">
    <property type="entry name" value="PseudoU_synth_2"/>
    <property type="match status" value="1"/>
</dbReference>
<dbReference type="SUPFAM" id="SSF55120">
    <property type="entry name" value="Pseudouridine synthase"/>
    <property type="match status" value="1"/>
</dbReference>
<dbReference type="PROSITE" id="PS01149">
    <property type="entry name" value="PSI_RSU"/>
    <property type="match status" value="1"/>
</dbReference>
<sequence length="234" mass="26401">MSFRSSSTSPRSNKQTATKRFKQSGQAQSVGSPKRHSVKRKNNEQSKKSLSLAERKIIIFNKPYDTLSQFTDGEGRKTLADFIPVKEVYAAGRLDRDSEGLMVLTNDGILQAKLTQPKSKSPKTYWVQVEGAPTEAQLEPLRRGVELKDGLTLPAQVEIIQDPQLWERNPPVRFRAAIPTTWLAITIIEGRNRQVRRMTAHIGFPTLRLVRYSMGGMTLQDLQPGEWKEISLPS</sequence>
<reference key="1">
    <citation type="submission" date="2002-12" db="EMBL/GenBank/DDBJ databases">
        <title>Complete genome sequence of Vibrio vulnificus CMCP6.</title>
        <authorList>
            <person name="Rhee J.H."/>
            <person name="Kim S.Y."/>
            <person name="Chung S.S."/>
            <person name="Kim J.J."/>
            <person name="Moon Y.H."/>
            <person name="Jeong H."/>
            <person name="Choy H.E."/>
        </authorList>
    </citation>
    <scope>NUCLEOTIDE SEQUENCE [LARGE SCALE GENOMIC DNA]</scope>
    <source>
        <strain>CMCP6</strain>
    </source>
</reference>
<feature type="chain" id="PRO_0000100012" description="Ribosomal large subunit pseudouridine synthase E">
    <location>
        <begin position="1"/>
        <end position="234"/>
    </location>
</feature>
<feature type="region of interest" description="Disordered" evidence="2">
    <location>
        <begin position="1"/>
        <end position="49"/>
    </location>
</feature>
<feature type="compositionally biased region" description="Low complexity" evidence="2">
    <location>
        <begin position="1"/>
        <end position="12"/>
    </location>
</feature>
<feature type="active site" description="Nucleophile" evidence="1">
    <location>
        <position position="95"/>
    </location>
</feature>
<protein>
    <recommendedName>
        <fullName>Ribosomal large subunit pseudouridine synthase E</fullName>
        <ecNumber>5.4.99.20</ecNumber>
    </recommendedName>
    <alternativeName>
        <fullName>rRNA pseudouridylate synthase E</fullName>
    </alternativeName>
    <alternativeName>
        <fullName>rRNA-uridine isomerase E</fullName>
    </alternativeName>
</protein>
<name>RLUE_VIBVU</name>
<evidence type="ECO:0000250" key="1"/>
<evidence type="ECO:0000256" key="2">
    <source>
        <dbReference type="SAM" id="MobiDB-lite"/>
    </source>
</evidence>
<evidence type="ECO:0000305" key="3"/>
<organism>
    <name type="scientific">Vibrio vulnificus (strain CMCP6)</name>
    <dbReference type="NCBI Taxonomy" id="216895"/>
    <lineage>
        <taxon>Bacteria</taxon>
        <taxon>Pseudomonadati</taxon>
        <taxon>Pseudomonadota</taxon>
        <taxon>Gammaproteobacteria</taxon>
        <taxon>Vibrionales</taxon>
        <taxon>Vibrionaceae</taxon>
        <taxon>Vibrio</taxon>
    </lineage>
</organism>